<evidence type="ECO:0000250" key="1">
    <source>
        <dbReference type="UniProtKB" id="P50389"/>
    </source>
</evidence>
<evidence type="ECO:0000255" key="2">
    <source>
        <dbReference type="HAMAP-Rule" id="MF_01627"/>
    </source>
</evidence>
<organism>
    <name type="scientific">Actinobacillus pleuropneumoniae serotype 5b (strain L20)</name>
    <dbReference type="NCBI Taxonomy" id="416269"/>
    <lineage>
        <taxon>Bacteria</taxon>
        <taxon>Pseudomonadati</taxon>
        <taxon>Pseudomonadota</taxon>
        <taxon>Gammaproteobacteria</taxon>
        <taxon>Pasteurellales</taxon>
        <taxon>Pasteurellaceae</taxon>
        <taxon>Actinobacillus</taxon>
    </lineage>
</organism>
<dbReference type="EC" id="2.4.2.1" evidence="2"/>
<dbReference type="EMBL" id="CP000569">
    <property type="protein sequence ID" value="ABN74108.1"/>
    <property type="molecule type" value="Genomic_DNA"/>
</dbReference>
<dbReference type="RefSeq" id="WP_005597795.1">
    <property type="nucleotide sequence ID" value="NC_009053.1"/>
</dbReference>
<dbReference type="SMR" id="A3N122"/>
<dbReference type="STRING" id="416269.APL_1014"/>
<dbReference type="EnsemblBacteria" id="ABN74108">
    <property type="protein sequence ID" value="ABN74108"/>
    <property type="gene ID" value="APL_1014"/>
</dbReference>
<dbReference type="GeneID" id="48599241"/>
<dbReference type="KEGG" id="apl:APL_1014"/>
<dbReference type="eggNOG" id="COG0813">
    <property type="taxonomic scope" value="Bacteria"/>
</dbReference>
<dbReference type="HOGENOM" id="CLU_068457_2_0_6"/>
<dbReference type="Proteomes" id="UP000001432">
    <property type="component" value="Chromosome"/>
</dbReference>
<dbReference type="GO" id="GO:0005829">
    <property type="term" value="C:cytosol"/>
    <property type="evidence" value="ECO:0007669"/>
    <property type="project" value="TreeGrafter"/>
</dbReference>
<dbReference type="GO" id="GO:0004731">
    <property type="term" value="F:purine-nucleoside phosphorylase activity"/>
    <property type="evidence" value="ECO:0007669"/>
    <property type="project" value="UniProtKB-UniRule"/>
</dbReference>
<dbReference type="GO" id="GO:0006152">
    <property type="term" value="P:purine nucleoside catabolic process"/>
    <property type="evidence" value="ECO:0007669"/>
    <property type="project" value="TreeGrafter"/>
</dbReference>
<dbReference type="CDD" id="cd09006">
    <property type="entry name" value="PNP_EcPNPI-like"/>
    <property type="match status" value="1"/>
</dbReference>
<dbReference type="FunFam" id="3.40.50.1580:FF:000002">
    <property type="entry name" value="Purine nucleoside phosphorylase DeoD-type"/>
    <property type="match status" value="1"/>
</dbReference>
<dbReference type="Gene3D" id="3.40.50.1580">
    <property type="entry name" value="Nucleoside phosphorylase domain"/>
    <property type="match status" value="1"/>
</dbReference>
<dbReference type="HAMAP" id="MF_01627">
    <property type="entry name" value="Pur_nucleosid_phosp"/>
    <property type="match status" value="1"/>
</dbReference>
<dbReference type="InterPro" id="IPR004402">
    <property type="entry name" value="DeoD-type"/>
</dbReference>
<dbReference type="InterPro" id="IPR018016">
    <property type="entry name" value="Nucleoside_phosphorylase_CS"/>
</dbReference>
<dbReference type="InterPro" id="IPR000845">
    <property type="entry name" value="Nucleoside_phosphorylase_d"/>
</dbReference>
<dbReference type="InterPro" id="IPR035994">
    <property type="entry name" value="Nucleoside_phosphorylase_sf"/>
</dbReference>
<dbReference type="NCBIfam" id="TIGR00107">
    <property type="entry name" value="deoD"/>
    <property type="match status" value="1"/>
</dbReference>
<dbReference type="NCBIfam" id="NF004489">
    <property type="entry name" value="PRK05819.1"/>
    <property type="match status" value="1"/>
</dbReference>
<dbReference type="NCBIfam" id="NF009914">
    <property type="entry name" value="PRK13374.1"/>
    <property type="match status" value="1"/>
</dbReference>
<dbReference type="PANTHER" id="PTHR43691:SF2">
    <property type="entry name" value="PURINE NUCLEOSIDE PHOSPHORYLASE DEOD-TYPE"/>
    <property type="match status" value="1"/>
</dbReference>
<dbReference type="PANTHER" id="PTHR43691">
    <property type="entry name" value="URIDINE PHOSPHORYLASE"/>
    <property type="match status" value="1"/>
</dbReference>
<dbReference type="Pfam" id="PF01048">
    <property type="entry name" value="PNP_UDP_1"/>
    <property type="match status" value="1"/>
</dbReference>
<dbReference type="SUPFAM" id="SSF53167">
    <property type="entry name" value="Purine and uridine phosphorylases"/>
    <property type="match status" value="1"/>
</dbReference>
<dbReference type="PROSITE" id="PS01232">
    <property type="entry name" value="PNP_UDP_1"/>
    <property type="match status" value="1"/>
</dbReference>
<protein>
    <recommendedName>
        <fullName evidence="2">Purine nucleoside phosphorylase DeoD-type</fullName>
        <shortName evidence="2">PNP</shortName>
        <ecNumber evidence="2">2.4.2.1</ecNumber>
    </recommendedName>
</protein>
<feature type="chain" id="PRO_1000069616" description="Purine nucleoside phosphorylase DeoD-type">
    <location>
        <begin position="1"/>
        <end position="240"/>
    </location>
</feature>
<feature type="active site" description="Proton donor" evidence="2">
    <location>
        <position position="205"/>
    </location>
</feature>
<feature type="binding site" evidence="1">
    <location>
        <position position="5"/>
    </location>
    <ligand>
        <name>a purine D-ribonucleoside</name>
        <dbReference type="ChEBI" id="CHEBI:142355"/>
        <note>ligand shared between dimeric partners</note>
    </ligand>
</feature>
<feature type="binding site" description="in other chain" evidence="1">
    <location>
        <position position="21"/>
    </location>
    <ligand>
        <name>phosphate</name>
        <dbReference type="ChEBI" id="CHEBI:43474"/>
        <note>ligand shared between dimeric partners</note>
    </ligand>
</feature>
<feature type="binding site" description="in other chain" evidence="1">
    <location>
        <position position="25"/>
    </location>
    <ligand>
        <name>phosphate</name>
        <dbReference type="ChEBI" id="CHEBI:43474"/>
        <note>ligand shared between dimeric partners</note>
    </ligand>
</feature>
<feature type="binding site" evidence="1">
    <location>
        <position position="44"/>
    </location>
    <ligand>
        <name>phosphate</name>
        <dbReference type="ChEBI" id="CHEBI:43474"/>
        <note>ligand shared between dimeric partners</note>
    </ligand>
</feature>
<feature type="binding site" description="in other chain" evidence="1">
    <location>
        <begin position="88"/>
        <end position="91"/>
    </location>
    <ligand>
        <name>phosphate</name>
        <dbReference type="ChEBI" id="CHEBI:43474"/>
        <note>ligand shared between dimeric partners</note>
    </ligand>
</feature>
<feature type="binding site" description="in other chain" evidence="1">
    <location>
        <begin position="180"/>
        <end position="182"/>
    </location>
    <ligand>
        <name>a purine D-ribonucleoside</name>
        <dbReference type="ChEBI" id="CHEBI:142355"/>
        <note>ligand shared between dimeric partners</note>
    </ligand>
</feature>
<feature type="binding site" description="in other chain" evidence="1">
    <location>
        <begin position="204"/>
        <end position="205"/>
    </location>
    <ligand>
        <name>a purine D-ribonucleoside</name>
        <dbReference type="ChEBI" id="CHEBI:142355"/>
        <note>ligand shared between dimeric partners</note>
    </ligand>
</feature>
<feature type="site" description="Important for catalytic activity" evidence="2">
    <location>
        <position position="218"/>
    </location>
</feature>
<name>DEOD_ACTP2</name>
<proteinExistence type="inferred from homology"/>
<accession>A3N122</accession>
<comment type="function">
    <text evidence="2">Catalyzes the reversible phosphorolytic breakdown of the N-glycosidic bond in the beta-(deoxy)ribonucleoside molecules, with the formation of the corresponding free purine bases and pentose-1-phosphate.</text>
</comment>
<comment type="catalytic activity">
    <reaction evidence="2">
        <text>a purine D-ribonucleoside + phosphate = a purine nucleobase + alpha-D-ribose 1-phosphate</text>
        <dbReference type="Rhea" id="RHEA:19805"/>
        <dbReference type="ChEBI" id="CHEBI:26386"/>
        <dbReference type="ChEBI" id="CHEBI:43474"/>
        <dbReference type="ChEBI" id="CHEBI:57720"/>
        <dbReference type="ChEBI" id="CHEBI:142355"/>
        <dbReference type="EC" id="2.4.2.1"/>
    </reaction>
</comment>
<comment type="catalytic activity">
    <reaction evidence="2">
        <text>a purine 2'-deoxy-D-ribonucleoside + phosphate = a purine nucleobase + 2-deoxy-alpha-D-ribose 1-phosphate</text>
        <dbReference type="Rhea" id="RHEA:36431"/>
        <dbReference type="ChEBI" id="CHEBI:26386"/>
        <dbReference type="ChEBI" id="CHEBI:43474"/>
        <dbReference type="ChEBI" id="CHEBI:57259"/>
        <dbReference type="ChEBI" id="CHEBI:142361"/>
        <dbReference type="EC" id="2.4.2.1"/>
    </reaction>
</comment>
<comment type="subunit">
    <text evidence="2">Homohexamer; trimer of homodimers.</text>
</comment>
<comment type="similarity">
    <text evidence="2">Belongs to the PNP/UDP phosphorylase family.</text>
</comment>
<reference key="1">
    <citation type="journal article" date="2008" name="J. Bacteriol.">
        <title>The complete genome sequence of Actinobacillus pleuropneumoniae L20 (serotype 5b).</title>
        <authorList>
            <person name="Foote S.J."/>
            <person name="Bosse J.T."/>
            <person name="Bouevitch A.B."/>
            <person name="Langford P.R."/>
            <person name="Young N.M."/>
            <person name="Nash J.H.E."/>
        </authorList>
    </citation>
    <scope>NUCLEOTIDE SEQUENCE [LARGE SCALE GENOMIC DNA]</scope>
    <source>
        <strain>L20</strain>
    </source>
</reference>
<gene>
    <name evidence="2" type="primary">deoD</name>
    <name type="ordered locus">APL_1014</name>
</gene>
<keyword id="KW-0328">Glycosyltransferase</keyword>
<keyword id="KW-1185">Reference proteome</keyword>
<keyword id="KW-0808">Transferase</keyword>
<sequence>MATPHINAPEGAFADVVLMPGDPLRAKYIAETFLEDAVQVTDVRNMFGYTGTYKGRRISVMGHGMGIPSCSIYAKELITEYGVKKIIRVGSCGAVRQDVKVRDVIIGSGACTDSKVNRIRFRDNDFAAISDFDMTLAAVQAAKQKGIAARVGNLFSADLFYTPDVEMFDVMEKYGILGVEMEAAGIYAVAAEYGAKALAICTVSDHIRTGEQTSSEERQLTFNDMITIALESVLIGDKAE</sequence>